<sequence>MKKSNFFVLLLLAISAIQIDGLHYQLLDGIATFRLDNDDTTIGGVPRNSQGVVKIKLSCGLNRLSVENKVTEVSSLELIHNCIQTETRLVGLFLNSTWITLNEVNDDDEISIAVEAKYEVCYDDGIDRCDGSLWWLQVGGNEMALLGYREKCESGEINEEYARRMCKRPYRSEKSTAISDSQGVYYDGQVLKGVRAKQFSMRTSGSPTLRRMKRDAGDNTCDYTIESTSTSTTTPTTTTVTSTVTSTTTVPTSTSTVTTAMSTSTSTPSTSTTIESTSTTFTSTASTSTSSTSTTQQSSSTITSSPSSTTLSTSIPTTTTPEITSTLSSLPDNAICSYLDETTTSTTFTTTMLTSTTTEEPSTSTTTTEVTSTSSTVTTTEPTTTLTTSTASTSTTEPSTSTVTTSPSTSPVTSTVTSSSSSSTTVTTPTSTESTSTSPSSTVTTSTTAPSTSTTGPSSSSSTPSSTASSSVSSTASSTQSSTSTQQSSTTTKSETTTSSDGTNPDFYFVEKATTTFYDSTSVNLTLNSGLGIIGYQTSIECTSPTSSNYVSTTKDGACFTKSVSMPRLGGTYPASTFVGPGNYTFRATMTTDDKKVYYTYANVYIQEYSSTTIESESSTSAVASSTSSTPSTPSSTLSTSTVTEPSSTRSSDSTTTSAGSTTTLQESTTTSEESTTDSSTTTISDTSTTSSSPSSTTADSTSTLSVDQFDFILDSGLSWNETRHNEDSINIVPLPTNAITPTERSQTFECRNVSTEPFLIIKESTCLNYSNTVLNATYSSNIPIQPIETFLVGIGTYEFRINMTDLTTMQVVSHIFTLNVVADSTSTSEVTSTTSTGSSSESSAISTTSGIESTSTLEASTTDASQDSSTSTSDSGTTSDSTTIDSSNSTPSTSDSSGLSQTPSDSSSASDSMRTTTVDPDASTETPYDFVLENLTWNETVYYSENPFYITPIPNKEPGALTTAMTCQCRNDSSQPFVLLKESNCLTEFGKNGAYSASVSFNPMTSFVPATGTYEFLINVTNRASGESASHIFTMNVVLPTTTTETPPTTVSSSDDAGGKTGGTGATGGTGGTGSGGSATTLSTGDAVRSTTSGSGSGQSSTGSGAGGSGTTASGSGSGGSSGTGSDGVNSGKTTALNGDGTGSGTATTPGSHLGDGGSTSGSGSDSNGSSGVSTKSSSGSDTSGSSDSSGANGAFSATAQPSTRTTKTRSSLATVSPISAAEQAIIDAQKADVMNQLAGIMDGSASNNSLNTSSSLLNQISSLPAADLVEVAQSLLSNTLKIPGVGNMSSVDVLKTLQDNIATTNSELADEMAKVITKLANVNMTSAQSLNSVLSSLDLALKGSTVYTLGVSSTKSKDGTYAVIFGYVIASGYTLVSPRCTLSIYGSTIYLTGDTRASYKQLDGDTVTADTMLAAAIGIQGMFATNGRTVQVEQDKIDDKRSLVSGNIMATMSGVGDVQSGEYSYNDMYVTAWNVTYDNSTVGSTSQKNTSFSFNIPVSEVQYILLIESGTMIKLHSTQNIVSRGLVVTASYGGVTYTITCTNGTGKFVEVDTDNAIFSYNADSFTVVASDGSSASTVKKLIQMPIVIENVNLALFNQTTSPLVFSNAGSYSMRMVLSPQDIGIPAVSALSQTVSISTLSPTASYTKDDLQSLIKEQTLVTVSGTLFFSKASSIDVSGYSFFVDSTALYLSNSVTTLVISSPTYNIVSLALGGYGIQITAGTYTSGSQTHTVTLMEFSDTQKMRIDGGLIIRNGTNGYVIQNGQVSTEGDVSGTKIDIVPQSLMNQESQQQIETILSNTQDFLTNNGMTMTDAEINDTSNSLLSIAGSLTSALKIALDNPLSSDLAANLKYATDNYDSLYNVLPSDPDNIVYVEEMTSEEWAAYVTKMFQKNIAKNLANQLASTLDTLENTLAARAIATGNLPYDYSNSVDGTGMVIVIDDASNIVGKTQNCEEWAFKLPSPASTLNTAEITDKTLIQVGLVCYATNPRTYVDNFDMLITSGALEAHIKDENQIIIPITGTTAPIYVNGRGSEDDAVLTLMQQGDFASYQILDLHAFRTTNWNNSLQVEIIASQDYEIPNNDDTYMFSSFQSLPGPLESNHEWIFDLNTLNKTSNYFVTAGNLINNTGLFFIGIGKRNSSTNTGNSSDIVNYGQYDSMQWSFARSVPMDYQVAAVSKGCYFYQKTSDVFNSEGMYPSDGQGMQFVNCSTDHLTMFSVGAFNPTIDADFSYNYNVNEIEKNVKVMIAAVFMLVVYGCLTINAIICQRKDASRGRLRFLKDNEPHDGYMYVIAVETGYRMFATTDSTICFNLSGNEGDQIFRSFRSEEDGNWEFPFSWGTTDRFVMTTAFPLGELEYMRLWLDDAGLDHRESWYCNRIIVKDLQTQDIYYFPFNNWLGTKNGDGETERLARVEYKRRFLDESMSMHMLAQTISWFAMFTGGGNRLRDRVSRQDYSVSIIFSLVVVSMISITILKSDNSIISDSKSVSEFTFTIKDIAFGVGFGVLITFLNSLHILLCTKCRSHSEHYYYKKRKREDPEFKDNSGSWPMFMAGMARTIIVFPVLMGLIYISGAGMSLMDDLANSFYIRFLISLILWAVVFEPIKGLIWAFLILKTRKSHKIINKLEEALLRAKPAETFLRNPYGKIEKGLGTEIADVTKLRDTENRKMRDEQLFITIRDMLCFFASLYIMVMLTYYCKDRHGYWYQLEMSTILNINQKNYGDNTFMSIQHADDFWDWARESLATALLASWYDGNPAYGMRAYMNDKVSRSMGIGTIRQVRTKKSAECTMFKQFQGYINDCGEELTSKNEEKTLYMQAGWTELESENGTDASDEYTYKTSEELSTETVSGLLYSYSGGGYTISMSGTQAEIITLFNKLDSERWIDDHTRAVIIEFSAYNAQINYFSVVQLLVEIPKSGIYLPNSWVESVRLIKSEGSDGTVVKYYEMLYIFFSVLIFVKEIVFYLYGRYKVITTMKPTRNPFKIVYQLALGNFSPWNFMDLIVGALAVASVLAYTIRQRTTNRAMEDFNANNGNSYINLTEQRNWEIVFSYCLAGAVFFTSCKMIRILRFNRRIGVLAATLDNALGAIVSFGIAFLFFSMTFNSVLYAVLGNKMGGYRSLMATFQTALAGMLGKLDVTSIQPISQFAFVVIMLYMIAGSKLVLQLYVTIIMFEFEEIRNDSEKQTNDYEIIDHIKYKTKRRLGLLEPKDFAPVSIADTQKDFRLFHSAVAKVNLLHHRATRMLQTQGQYQNQTVINYTLSYDPVSAIHETGPKRFQKWRLNDVEKD</sequence>
<protein>
    <recommendedName>
        <fullName>Location of vulva defective 1</fullName>
    </recommendedName>
    <alternativeName>
        <fullName>Polycystic kidney disease 1 protein homolog</fullName>
    </alternativeName>
    <alternativeName>
        <fullName>Polycystin-1</fullName>
    </alternativeName>
</protein>
<evidence type="ECO:0000255" key="1"/>
<evidence type="ECO:0000255" key="2">
    <source>
        <dbReference type="PROSITE-ProRule" id="PRU00098"/>
    </source>
</evidence>
<evidence type="ECO:0000255" key="3">
    <source>
        <dbReference type="PROSITE-ProRule" id="PRU00152"/>
    </source>
</evidence>
<evidence type="ECO:0000256" key="4">
    <source>
        <dbReference type="SAM" id="MobiDB-lite"/>
    </source>
</evidence>
<evidence type="ECO:0000269" key="5">
    <source>
    </source>
</evidence>
<evidence type="ECO:0000269" key="6">
    <source>
    </source>
</evidence>
<evidence type="ECO:0000269" key="7">
    <source>
    </source>
</evidence>
<evidence type="ECO:0000269" key="8">
    <source>
    </source>
</evidence>
<evidence type="ECO:0000269" key="9">
    <source>
    </source>
</evidence>
<evidence type="ECO:0000269" key="10">
    <source>
    </source>
</evidence>
<evidence type="ECO:0000269" key="11">
    <source>
    </source>
</evidence>
<evidence type="ECO:0000269" key="12">
    <source>
    </source>
</evidence>
<evidence type="ECO:0000305" key="13"/>
<keyword id="KW-0085">Behavior</keyword>
<keyword id="KW-0966">Cell projection</keyword>
<keyword id="KW-0969">Cilium</keyword>
<keyword id="KW-1015">Disulfide bond</keyword>
<keyword id="KW-0472">Membrane</keyword>
<keyword id="KW-1185">Reference proteome</keyword>
<keyword id="KW-0732">Signal</keyword>
<keyword id="KW-0812">Transmembrane</keyword>
<keyword id="KW-1133">Transmembrane helix</keyword>
<dbReference type="EMBL" id="Z48544">
    <property type="protein sequence ID" value="CAB70192.3"/>
    <property type="molecule type" value="Genomic_DNA"/>
</dbReference>
<dbReference type="EMBL" id="Z48582">
    <property type="protein sequence ID" value="CAB70192.3"/>
    <property type="status" value="JOINED"/>
    <property type="molecule type" value="Genomic_DNA"/>
</dbReference>
<dbReference type="PIR" id="T28125">
    <property type="entry name" value="T28125"/>
</dbReference>
<dbReference type="RefSeq" id="NP_496184.3">
    <property type="nucleotide sequence ID" value="NM_063783.4"/>
</dbReference>
<dbReference type="BioGRID" id="39895">
    <property type="interactions" value="3"/>
</dbReference>
<dbReference type="ComplexPortal" id="CPX-3887">
    <property type="entry name" value="TRPP complex"/>
</dbReference>
<dbReference type="FunCoup" id="Q09624">
    <property type="interactions" value="155"/>
</dbReference>
<dbReference type="IntAct" id="Q09624">
    <property type="interactions" value="3"/>
</dbReference>
<dbReference type="STRING" id="6239.ZK945.9.1"/>
<dbReference type="PaxDb" id="6239-ZK945.9"/>
<dbReference type="EnsemblMetazoa" id="ZK945.9.1">
    <property type="protein sequence ID" value="ZK945.9.1"/>
    <property type="gene ID" value="WBGene00003058"/>
</dbReference>
<dbReference type="GeneID" id="174576"/>
<dbReference type="KEGG" id="cel:CELE_ZK945.9"/>
<dbReference type="AGR" id="WB:WBGene00003058"/>
<dbReference type="CTD" id="174576"/>
<dbReference type="WormBase" id="ZK945.9">
    <property type="protein sequence ID" value="CE45696"/>
    <property type="gene ID" value="WBGene00003058"/>
    <property type="gene designation" value="lov-1"/>
</dbReference>
<dbReference type="eggNOG" id="KOG3599">
    <property type="taxonomic scope" value="Eukaryota"/>
</dbReference>
<dbReference type="GeneTree" id="ENSGT00940000164047"/>
<dbReference type="HOGENOM" id="CLU_000354_0_0_1"/>
<dbReference type="InParanoid" id="Q09624"/>
<dbReference type="OMA" id="HADDFWD"/>
<dbReference type="OrthoDB" id="444119at2759"/>
<dbReference type="PRO" id="PR:Q09624"/>
<dbReference type="Proteomes" id="UP000001940">
    <property type="component" value="Chromosome II"/>
</dbReference>
<dbReference type="Bgee" id="WBGene00003058">
    <property type="expression patterns" value="Expressed in material anatomical entity and 2 other cell types or tissues"/>
</dbReference>
<dbReference type="GO" id="GO:0005929">
    <property type="term" value="C:cilium"/>
    <property type="evidence" value="ECO:0000314"/>
    <property type="project" value="UniProtKB"/>
</dbReference>
<dbReference type="GO" id="GO:0016020">
    <property type="term" value="C:membrane"/>
    <property type="evidence" value="ECO:0000318"/>
    <property type="project" value="GO_Central"/>
</dbReference>
<dbReference type="GO" id="GO:0043025">
    <property type="term" value="C:neuronal cell body"/>
    <property type="evidence" value="ECO:0000314"/>
    <property type="project" value="WormBase"/>
</dbReference>
<dbReference type="GO" id="GO:0097730">
    <property type="term" value="C:non-motile cilium"/>
    <property type="evidence" value="ECO:0000314"/>
    <property type="project" value="WormBase"/>
</dbReference>
<dbReference type="GO" id="GO:0071683">
    <property type="term" value="C:sensory dendrite"/>
    <property type="evidence" value="ECO:0000303"/>
    <property type="project" value="ComplexPortal"/>
</dbReference>
<dbReference type="GO" id="GO:0005262">
    <property type="term" value="F:calcium channel activity"/>
    <property type="evidence" value="ECO:0000318"/>
    <property type="project" value="GO_Central"/>
</dbReference>
<dbReference type="GO" id="GO:0019904">
    <property type="term" value="F:protein domain specific binding"/>
    <property type="evidence" value="ECO:0000353"/>
    <property type="project" value="WormBase"/>
</dbReference>
<dbReference type="GO" id="GO:0050982">
    <property type="term" value="P:detection of mechanical stimulus"/>
    <property type="evidence" value="ECO:0000318"/>
    <property type="project" value="GO_Central"/>
</dbReference>
<dbReference type="GO" id="GO:0060179">
    <property type="term" value="P:male mating behavior"/>
    <property type="evidence" value="ECO:0000315"/>
    <property type="project" value="UniProtKB"/>
</dbReference>
<dbReference type="GO" id="GO:0007617">
    <property type="term" value="P:mating behavior"/>
    <property type="evidence" value="ECO:0000315"/>
    <property type="project" value="WormBase"/>
</dbReference>
<dbReference type="GO" id="GO:1902435">
    <property type="term" value="P:regulation of male mating behavior"/>
    <property type="evidence" value="ECO:0000303"/>
    <property type="project" value="ComplexPortal"/>
</dbReference>
<dbReference type="GO" id="GO:0034606">
    <property type="term" value="P:response to hermaphrodite contact"/>
    <property type="evidence" value="ECO:0000315"/>
    <property type="project" value="UniProtKB"/>
</dbReference>
<dbReference type="GO" id="GO:0034608">
    <property type="term" value="P:vulval location"/>
    <property type="evidence" value="ECO:0000315"/>
    <property type="project" value="UniProtKB"/>
</dbReference>
<dbReference type="CDD" id="cd01752">
    <property type="entry name" value="PLAT_polycystin"/>
    <property type="match status" value="1"/>
</dbReference>
<dbReference type="FunFam" id="2.60.60.20:FF:000027">
    <property type="entry name" value="Protein CBR-LOV-1"/>
    <property type="match status" value="1"/>
</dbReference>
<dbReference type="Gene3D" id="2.60.60.20">
    <property type="entry name" value="PLAT/LH2 domain"/>
    <property type="match status" value="1"/>
</dbReference>
<dbReference type="InterPro" id="IPR057244">
    <property type="entry name" value="GAIN_B"/>
</dbReference>
<dbReference type="InterPro" id="IPR000203">
    <property type="entry name" value="GPS"/>
</dbReference>
<dbReference type="InterPro" id="IPR013122">
    <property type="entry name" value="PKD1_2_channel"/>
</dbReference>
<dbReference type="InterPro" id="IPR001024">
    <property type="entry name" value="PLAT/LH2_dom"/>
</dbReference>
<dbReference type="InterPro" id="IPR036392">
    <property type="entry name" value="PLAT/LH2_dom_sf"/>
</dbReference>
<dbReference type="InterPro" id="IPR042060">
    <property type="entry name" value="PLAT_polycystin1"/>
</dbReference>
<dbReference type="InterPro" id="IPR051223">
    <property type="entry name" value="Polycystin"/>
</dbReference>
<dbReference type="InterPro" id="IPR046791">
    <property type="entry name" value="Polycystin_dom"/>
</dbReference>
<dbReference type="PANTHER" id="PTHR10877:SF194">
    <property type="entry name" value="LOCATION OF VULVA DEFECTIVE 1"/>
    <property type="match status" value="1"/>
</dbReference>
<dbReference type="PANTHER" id="PTHR10877">
    <property type="entry name" value="POLYCYSTIN FAMILY MEMBER"/>
    <property type="match status" value="1"/>
</dbReference>
<dbReference type="Pfam" id="PF08016">
    <property type="entry name" value="PKD_channel"/>
    <property type="match status" value="1"/>
</dbReference>
<dbReference type="Pfam" id="PF01477">
    <property type="entry name" value="PLAT"/>
    <property type="match status" value="1"/>
</dbReference>
<dbReference type="Pfam" id="PF20519">
    <property type="entry name" value="Polycystin_dom"/>
    <property type="match status" value="1"/>
</dbReference>
<dbReference type="SMART" id="SM00303">
    <property type="entry name" value="GPS"/>
    <property type="match status" value="1"/>
</dbReference>
<dbReference type="SMART" id="SM00308">
    <property type="entry name" value="LH2"/>
    <property type="match status" value="1"/>
</dbReference>
<dbReference type="SUPFAM" id="SSF49723">
    <property type="entry name" value="Lipase/lipooxygenase domain (PLAT/LH2 domain)"/>
    <property type="match status" value="1"/>
</dbReference>
<dbReference type="PROSITE" id="PS50221">
    <property type="entry name" value="GAIN_B"/>
    <property type="match status" value="1"/>
</dbReference>
<dbReference type="PROSITE" id="PS50095">
    <property type="entry name" value="PLAT"/>
    <property type="match status" value="1"/>
</dbReference>
<proteinExistence type="evidence at protein level"/>
<comment type="function">
    <text evidence="5 6 7 8 9 11">Required for two aspects of male mating behavior: response to hermaphrodite contact and vulva location. Acts in the same pathway as pkd-2 and atp-2 in response behavior. May be required for ciliary targeting of pkd-2.</text>
</comment>
<comment type="subunit">
    <text evidence="8 10 12">Interacts (via PLAT domain) with atp-2 (via N-terminus) and with kin-10 (via C-terminus). Interacts (via C-terminus) with isoform a of stam-1/pqn-19 (via C-terminus).</text>
</comment>
<comment type="interaction">
    <interactant intactId="EBI-2529627">
        <id>Q09624</id>
    </interactant>
    <interactant intactId="EBI-316294">
        <id>P46561</id>
        <label>atp-2</label>
    </interactant>
    <organismsDiffer>false</organismsDiffer>
    <experiments>4</experiments>
</comment>
<comment type="interaction">
    <interactant intactId="EBI-2529627">
        <id>Q09624</id>
    </interactant>
    <interactant intactId="EBI-317777">
        <id>P28548</id>
        <label>kin-10</label>
    </interactant>
    <organismsDiffer>false</organismsDiffer>
    <experiments>2</experiments>
</comment>
<comment type="subcellular location">
    <subcellularLocation>
        <location evidence="13">Membrane</location>
        <topology evidence="13">Multi-pass membrane protein</topology>
    </subcellularLocation>
    <subcellularLocation>
        <location evidence="12">Cell projection</location>
        <location evidence="12">Cilium</location>
    </subcellularLocation>
    <text>localizes to both the ciliary base and cilium proper.</text>
</comment>
<comment type="tissue specificity">
    <text evidence="5 6 7 8 12">Exclusively expressed in a subset of three categories of adult male sensory neurons: ray neurons, hook neurons and head cephalic (CEM) neurons.</text>
</comment>
<comment type="developmental stage">
    <text evidence="7">First expressed during L4 and peaks in the adult male.</text>
</comment>
<comment type="PTM">
    <text evidence="2">Autoproteolytically processed at the GPS region of the GAIN-B domain; this cleavage modulates receptor activity.</text>
</comment>
<comment type="miscellaneous">
    <text>Worms lacking lov-1 exhibit defects in two aspects of male mating behavior: response to hermaphrodite contact and vulva location.</text>
</comment>
<comment type="similarity">
    <text evidence="13">Belongs to the polycystin family.</text>
</comment>
<accession>Q09624</accession>
<accession>Q09625</accession>
<accession>Q969D4</accession>
<name>PKD1_CAEEL</name>
<feature type="signal peptide" evidence="1">
    <location>
        <begin position="1"/>
        <end position="21"/>
    </location>
</feature>
<feature type="chain" id="PRO_0000065555" description="Location of vulva defective 1">
    <location>
        <begin position="22"/>
        <end position="3284"/>
    </location>
</feature>
<feature type="transmembrane region" description="Helical" evidence="1">
    <location>
        <begin position="2245"/>
        <end position="2265"/>
    </location>
</feature>
<feature type="transmembrane region" description="Helical" evidence="1">
    <location>
        <begin position="2453"/>
        <end position="2473"/>
    </location>
</feature>
<feature type="transmembrane region" description="Helical" evidence="1">
    <location>
        <begin position="2496"/>
        <end position="2516"/>
    </location>
</feature>
<feature type="transmembrane region" description="Helical" evidence="1">
    <location>
        <begin position="2557"/>
        <end position="2577"/>
    </location>
</feature>
<feature type="transmembrane region" description="Helical" evidence="1">
    <location>
        <begin position="2592"/>
        <end position="2612"/>
    </location>
</feature>
<feature type="transmembrane region" description="Helical" evidence="1">
    <location>
        <begin position="2672"/>
        <end position="2692"/>
    </location>
</feature>
<feature type="transmembrane region" description="Helical" evidence="1">
    <location>
        <begin position="2945"/>
        <end position="2965"/>
    </location>
</feature>
<feature type="transmembrane region" description="Helical" evidence="1">
    <location>
        <begin position="2994"/>
        <end position="3014"/>
    </location>
</feature>
<feature type="transmembrane region" description="Helical" evidence="1">
    <location>
        <begin position="3043"/>
        <end position="3063"/>
    </location>
</feature>
<feature type="transmembrane region" description="Helical" evidence="1">
    <location>
        <begin position="3089"/>
        <end position="3109"/>
    </location>
</feature>
<feature type="transmembrane region" description="Helical" evidence="1">
    <location>
        <begin position="3144"/>
        <end position="3164"/>
    </location>
</feature>
<feature type="domain" description="GAIN-B" evidence="2">
    <location>
        <begin position="2064"/>
        <end position="2227"/>
    </location>
</feature>
<feature type="domain" description="PLAT" evidence="3">
    <location>
        <begin position="2288"/>
        <end position="2411"/>
    </location>
</feature>
<feature type="region of interest" description="Disordered" evidence="4">
    <location>
        <begin position="226"/>
        <end position="326"/>
    </location>
</feature>
<feature type="region of interest" description="Disordered" evidence="4">
    <location>
        <begin position="350"/>
        <end position="505"/>
    </location>
</feature>
<feature type="region of interest" description="Disordered" evidence="4">
    <location>
        <begin position="623"/>
        <end position="702"/>
    </location>
</feature>
<feature type="region of interest" description="Disordered" evidence="4">
    <location>
        <begin position="827"/>
        <end position="926"/>
    </location>
</feature>
<feature type="region of interest" description="Disordered" evidence="4">
    <location>
        <begin position="1043"/>
        <end position="1216"/>
    </location>
</feature>
<feature type="region of interest" description="GPS" evidence="2">
    <location>
        <begin position="2181"/>
        <end position="2227"/>
    </location>
</feature>
<feature type="compositionally biased region" description="Low complexity" evidence="4">
    <location>
        <begin position="227"/>
        <end position="326"/>
    </location>
</feature>
<feature type="compositionally biased region" description="Low complexity" evidence="4">
    <location>
        <begin position="350"/>
        <end position="500"/>
    </location>
</feature>
<feature type="compositionally biased region" description="Low complexity" evidence="4">
    <location>
        <begin position="827"/>
        <end position="913"/>
    </location>
</feature>
<feature type="compositionally biased region" description="Polar residues" evidence="4">
    <location>
        <begin position="914"/>
        <end position="926"/>
    </location>
</feature>
<feature type="compositionally biased region" description="Low complexity" evidence="4">
    <location>
        <begin position="1043"/>
        <end position="1057"/>
    </location>
</feature>
<feature type="compositionally biased region" description="Gly residues" evidence="4">
    <location>
        <begin position="1060"/>
        <end position="1078"/>
    </location>
</feature>
<feature type="compositionally biased region" description="Low complexity" evidence="4">
    <location>
        <begin position="1079"/>
        <end position="1104"/>
    </location>
</feature>
<feature type="compositionally biased region" description="Gly residues" evidence="4">
    <location>
        <begin position="1105"/>
        <end position="1127"/>
    </location>
</feature>
<feature type="compositionally biased region" description="Polar residues" evidence="4">
    <location>
        <begin position="1128"/>
        <end position="1138"/>
    </location>
</feature>
<feature type="compositionally biased region" description="Low complexity" evidence="4">
    <location>
        <begin position="1163"/>
        <end position="1192"/>
    </location>
</feature>
<feature type="compositionally biased region" description="Polar residues" evidence="4">
    <location>
        <begin position="1197"/>
        <end position="1216"/>
    </location>
</feature>
<feature type="site" description="Cleavage; by autolysis" evidence="2">
    <location>
        <begin position="2214"/>
        <end position="2215"/>
    </location>
</feature>
<feature type="disulfide bond" evidence="2">
    <location>
        <begin position="2181"/>
        <end position="2209"/>
    </location>
</feature>
<reference key="1">
    <citation type="journal article" date="1998" name="Science">
        <title>Genome sequence of the nematode C. elegans: a platform for investigating biology.</title>
        <authorList>
            <consortium name="The C. elegans sequencing consortium"/>
        </authorList>
    </citation>
    <scope>NUCLEOTIDE SEQUENCE [LARGE SCALE GENOMIC DNA]</scope>
    <source>
        <strain>Bristol N2</strain>
    </source>
</reference>
<reference key="2">
    <citation type="journal article" date="1999" name="Nature">
        <title>A polycystic kidney-disease gene homologue required for male mating behaviour in C. elegans.</title>
        <authorList>
            <person name="Barr M.M."/>
            <person name="Sternberg P.W."/>
        </authorList>
    </citation>
    <scope>FUNCTION</scope>
    <scope>TISSUE SPECIFICITY</scope>
</reference>
<reference key="3">
    <citation type="journal article" date="2001" name="Curr. Biol.">
        <title>The Caenorhabditis elegans autosomal dominant polycystic kidney disease gene homologs lov-1 and pkd-2 act in the same pathway.</title>
        <authorList>
            <person name="Barr M.M."/>
            <person name="DeModena J."/>
            <person name="Braun D."/>
            <person name="Nguyen C.Q."/>
            <person name="Hall D.H."/>
            <person name="Sternberg P.W."/>
        </authorList>
    </citation>
    <scope>FUNCTION</scope>
    <scope>TISSUE SPECIFICITY</scope>
</reference>
<reference key="4">
    <citation type="journal article" date="2003" name="Nephron Exp. Nephrol.">
        <title>Towards understanding the polycystins.</title>
        <authorList>
            <person name="Kaletta T."/>
            <person name="Van der Craen M."/>
            <person name="Van Geel A."/>
            <person name="Dewulf N."/>
            <person name="Bogaert T."/>
            <person name="Branden M."/>
            <person name="King K.V."/>
            <person name="Buechner M."/>
            <person name="Barstead R."/>
            <person name="Hyink D."/>
            <person name="Li H.-P."/>
            <person name="Geng L."/>
            <person name="Burrow C."/>
            <person name="Wilson P."/>
        </authorList>
    </citation>
    <scope>FUNCTION</scope>
    <scope>TISSUE SPECIFICITY</scope>
    <scope>DEVELOPMENTAL STAGE</scope>
</reference>
<reference key="5">
    <citation type="journal article" date="2005" name="Curr. Biol.">
        <title>The KLP-6 kinesin is required for male mating behaviors and polycystin localization in Caenorhabditis elegans.</title>
        <authorList>
            <person name="Peden E.M."/>
            <person name="Barr M.M."/>
        </authorList>
    </citation>
    <scope>FUNCTION</scope>
</reference>
<reference key="6">
    <citation type="journal article" date="2005" name="Mol. Biol. Cell">
        <title>ATP-2 interacts with the PLAT domain of LOV-1 and is involved in Caenorhabditis elegans polycystin signaling.</title>
        <authorList>
            <person name="Hu J."/>
            <person name="Barr M.M."/>
        </authorList>
    </citation>
    <scope>FUNCTION</scope>
    <scope>INTERACTION WITH ATP-2</scope>
    <scope>TISSUE SPECIFICITY</scope>
</reference>
<reference key="7">
    <citation type="journal article" date="2006" name="Development">
        <title>General and cell-type specific mechanisms target TRPP2/PKD-2 to cilia.</title>
        <authorList>
            <person name="Bae Y.-K."/>
            <person name="Qin H."/>
            <person name="Knobel K.M."/>
            <person name="Hu J."/>
            <person name="Rosenbaum J.L."/>
            <person name="Barr M.M."/>
        </authorList>
    </citation>
    <scope>FUNCTION</scope>
</reference>
<reference key="8">
    <citation type="journal article" date="2006" name="Mol. Biol. Cell">
        <title>Casein kinase II and calcineurin modulate TRPP function and ciliary localization.</title>
        <authorList>
            <person name="Hu J."/>
            <person name="Bae Y.-K."/>
            <person name="Knobel K.M."/>
            <person name="Barr M.M."/>
        </authorList>
    </citation>
    <scope>INTERACTION WITH KIN-10</scope>
</reference>
<reference key="9">
    <citation type="journal article" date="2007" name="Mol. Biol. Cell">
        <title>STAM and Hrs down-regulate ciliary TRP receptors.</title>
        <authorList>
            <person name="Hu J."/>
            <person name="Wittekind S.G."/>
            <person name="Barr M.M."/>
        </authorList>
    </citation>
    <scope>INTERACTION WITH STAM-1</scope>
    <scope>SUBCELLULAR LOCATION</scope>
    <scope>TISSUE SPECIFICITY</scope>
</reference>
<organism>
    <name type="scientific">Caenorhabditis elegans</name>
    <dbReference type="NCBI Taxonomy" id="6239"/>
    <lineage>
        <taxon>Eukaryota</taxon>
        <taxon>Metazoa</taxon>
        <taxon>Ecdysozoa</taxon>
        <taxon>Nematoda</taxon>
        <taxon>Chromadorea</taxon>
        <taxon>Rhabditida</taxon>
        <taxon>Rhabditina</taxon>
        <taxon>Rhabditomorpha</taxon>
        <taxon>Rhabditoidea</taxon>
        <taxon>Rhabditidae</taxon>
        <taxon>Peloderinae</taxon>
        <taxon>Caenorhabditis</taxon>
    </lineage>
</organism>
<gene>
    <name type="primary">lov-1</name>
    <name type="synonym">pkd-1</name>
    <name type="ORF">ZK945.9/ZK945.10</name>
</gene>